<protein>
    <recommendedName>
        <fullName evidence="1">Probable protein kinase UbiB</fullName>
        <ecNumber evidence="1">2.7.-.-</ecNumber>
    </recommendedName>
    <alternativeName>
        <fullName evidence="1">Ubiquinone biosynthesis protein UbiB</fullName>
    </alternativeName>
</protein>
<keyword id="KW-0067">ATP-binding</keyword>
<keyword id="KW-0997">Cell inner membrane</keyword>
<keyword id="KW-1003">Cell membrane</keyword>
<keyword id="KW-0418">Kinase</keyword>
<keyword id="KW-0472">Membrane</keyword>
<keyword id="KW-0547">Nucleotide-binding</keyword>
<keyword id="KW-0808">Transferase</keyword>
<keyword id="KW-0812">Transmembrane</keyword>
<keyword id="KW-1133">Transmembrane helix</keyword>
<keyword id="KW-0831">Ubiquinone biosynthesis</keyword>
<reference key="1">
    <citation type="submission" date="2007-03" db="EMBL/GenBank/DDBJ databases">
        <authorList>
            <person name="Heidelberg J."/>
        </authorList>
    </citation>
    <scope>NUCLEOTIDE SEQUENCE [LARGE SCALE GENOMIC DNA]</scope>
    <source>
        <strain>ATCC 39541 / Classical Ogawa 395 / O395</strain>
    </source>
</reference>
<reference key="2">
    <citation type="journal article" date="2008" name="PLoS ONE">
        <title>A recalibrated molecular clock and independent origins for the cholera pandemic clones.</title>
        <authorList>
            <person name="Feng L."/>
            <person name="Reeves P.R."/>
            <person name="Lan R."/>
            <person name="Ren Y."/>
            <person name="Gao C."/>
            <person name="Zhou Z."/>
            <person name="Ren Y."/>
            <person name="Cheng J."/>
            <person name="Wang W."/>
            <person name="Wang J."/>
            <person name="Qian W."/>
            <person name="Li D."/>
            <person name="Wang L."/>
        </authorList>
    </citation>
    <scope>NUCLEOTIDE SEQUENCE [LARGE SCALE GENOMIC DNA]</scope>
    <source>
        <strain>ATCC 39541 / Classical Ogawa 395 / O395</strain>
    </source>
</reference>
<organism>
    <name type="scientific">Vibrio cholerae serotype O1 (strain ATCC 39541 / Classical Ogawa 395 / O395)</name>
    <dbReference type="NCBI Taxonomy" id="345073"/>
    <lineage>
        <taxon>Bacteria</taxon>
        <taxon>Pseudomonadati</taxon>
        <taxon>Pseudomonadota</taxon>
        <taxon>Gammaproteobacteria</taxon>
        <taxon>Vibrionales</taxon>
        <taxon>Vibrionaceae</taxon>
        <taxon>Vibrio</taxon>
    </lineage>
</organism>
<proteinExistence type="inferred from homology"/>
<name>UBIB_VIBC3</name>
<gene>
    <name evidence="1" type="primary">ubiB</name>
    <name type="ordered locus">VC0395_A2430</name>
    <name type="ordered locus">VC395_0095</name>
</gene>
<sequence>MKPAELKRLYRIVKVQLEYGLDELLPEHHLTRAPLLARKSLFWLRNQHADKALGDRLRLALQELGPVWIKFGQMMSTRRDLFPPYIADPLAMLQDKVAPFDGLQAKQLIEEELGAPLETWFDDFDIKPLASASIAQVHTAKLKSNGRDVVLKVIRPDIRPQIDADIKLMYRVARIVAKALPEARRLKPVEVVREYEKTLLDELDLRREAANAIQLRRNFENSEELYVPEVLTDFCNETVMVSERIYGIQVSDLAGLHANGTNMKLLAERGVSVFFTQVFRDSFFHADMHPGNVFVNPNHPENPQWIGLDCGIVGTLNSEDKRYLAENFLAFFNRDYRRVAQLHVDSGWVPLDTNVDEFEVAIRMVCEPIFAKPLCEISFGHVLLNLFNTARRFNMEVQPQLVLLQKTLLYVEGLGRQLYPQLDLWQTAKPFLEKWMANQVGPQAFLHALKERAPLWFEKMPELPELLYDSLKQGRNLNQRLDNLYQGYRQSKRQQGTGKFLFGVGATLVVCSAIWISNQLEPLAIGSATIGVLCWLLSWRAYRQ</sequence>
<comment type="function">
    <text evidence="1">Is probably a protein kinase regulator of UbiI activity which is involved in aerobic coenzyme Q (ubiquinone) biosynthesis.</text>
</comment>
<comment type="pathway">
    <text>Cofactor biosynthesis; ubiquinone biosynthesis [regulation].</text>
</comment>
<comment type="subcellular location">
    <subcellularLocation>
        <location evidence="1">Cell inner membrane</location>
        <topology evidence="1">Multi-pass membrane protein</topology>
    </subcellularLocation>
</comment>
<comment type="similarity">
    <text evidence="1">Belongs to the ABC1 family. UbiB subfamily.</text>
</comment>
<accession>A5F4G3</accession>
<accession>C3M2F9</accession>
<feature type="chain" id="PRO_1000072283" description="Probable protein kinase UbiB">
    <location>
        <begin position="1"/>
        <end position="544"/>
    </location>
</feature>
<feature type="transmembrane region" description="Helical" evidence="1">
    <location>
        <begin position="496"/>
        <end position="516"/>
    </location>
</feature>
<feature type="transmembrane region" description="Helical" evidence="1">
    <location>
        <begin position="519"/>
        <end position="539"/>
    </location>
</feature>
<feature type="domain" description="Protein kinase" evidence="1">
    <location>
        <begin position="123"/>
        <end position="501"/>
    </location>
</feature>
<feature type="active site" description="Proton acceptor" evidence="1">
    <location>
        <position position="287"/>
    </location>
</feature>
<feature type="binding site" evidence="1">
    <location>
        <begin position="129"/>
        <end position="137"/>
    </location>
    <ligand>
        <name>ATP</name>
        <dbReference type="ChEBI" id="CHEBI:30616"/>
    </ligand>
</feature>
<feature type="binding site" evidence="1">
    <location>
        <position position="152"/>
    </location>
    <ligand>
        <name>ATP</name>
        <dbReference type="ChEBI" id="CHEBI:30616"/>
    </ligand>
</feature>
<dbReference type="EC" id="2.7.-.-" evidence="1"/>
<dbReference type="EMBL" id="CP000627">
    <property type="protein sequence ID" value="ABQ21629.1"/>
    <property type="molecule type" value="Genomic_DNA"/>
</dbReference>
<dbReference type="EMBL" id="CP001235">
    <property type="protein sequence ID" value="ACP08123.1"/>
    <property type="molecule type" value="Genomic_DNA"/>
</dbReference>
<dbReference type="RefSeq" id="WP_000801149.1">
    <property type="nucleotide sequence ID" value="NZ_JAACZH010000014.1"/>
</dbReference>
<dbReference type="SMR" id="A5F4G3"/>
<dbReference type="KEGG" id="vco:VC0395_A2430"/>
<dbReference type="KEGG" id="vcr:VC395_0095"/>
<dbReference type="PATRIC" id="fig|345073.21.peg.87"/>
<dbReference type="eggNOG" id="COG0661">
    <property type="taxonomic scope" value="Bacteria"/>
</dbReference>
<dbReference type="HOGENOM" id="CLU_006533_0_0_6"/>
<dbReference type="OrthoDB" id="9795390at2"/>
<dbReference type="UniPathway" id="UPA00232"/>
<dbReference type="Proteomes" id="UP000000249">
    <property type="component" value="Chromosome 2"/>
</dbReference>
<dbReference type="GO" id="GO:0005886">
    <property type="term" value="C:plasma membrane"/>
    <property type="evidence" value="ECO:0007669"/>
    <property type="project" value="UniProtKB-SubCell"/>
</dbReference>
<dbReference type="GO" id="GO:0005524">
    <property type="term" value="F:ATP binding"/>
    <property type="evidence" value="ECO:0007669"/>
    <property type="project" value="UniProtKB-KW"/>
</dbReference>
<dbReference type="GO" id="GO:0004672">
    <property type="term" value="F:protein kinase activity"/>
    <property type="evidence" value="ECO:0007669"/>
    <property type="project" value="UniProtKB-UniRule"/>
</dbReference>
<dbReference type="GO" id="GO:0010795">
    <property type="term" value="P:regulation of ubiquinone biosynthetic process"/>
    <property type="evidence" value="ECO:0007669"/>
    <property type="project" value="UniProtKB-UniRule"/>
</dbReference>
<dbReference type="GO" id="GO:0006744">
    <property type="term" value="P:ubiquinone biosynthetic process"/>
    <property type="evidence" value="ECO:0007669"/>
    <property type="project" value="UniProtKB-UniPathway"/>
</dbReference>
<dbReference type="CDD" id="cd13972">
    <property type="entry name" value="UbiB"/>
    <property type="match status" value="1"/>
</dbReference>
<dbReference type="HAMAP" id="MF_00414">
    <property type="entry name" value="UbiB"/>
    <property type="match status" value="1"/>
</dbReference>
<dbReference type="InterPro" id="IPR004147">
    <property type="entry name" value="ABC1_dom"/>
</dbReference>
<dbReference type="InterPro" id="IPR011009">
    <property type="entry name" value="Kinase-like_dom_sf"/>
</dbReference>
<dbReference type="InterPro" id="IPR010232">
    <property type="entry name" value="UbiB"/>
</dbReference>
<dbReference type="InterPro" id="IPR045308">
    <property type="entry name" value="UbiB_bact"/>
</dbReference>
<dbReference type="InterPro" id="IPR050154">
    <property type="entry name" value="UbiB_kinase"/>
</dbReference>
<dbReference type="NCBIfam" id="NF003404">
    <property type="entry name" value="PRK04750.1"/>
    <property type="match status" value="1"/>
</dbReference>
<dbReference type="NCBIfam" id="TIGR01982">
    <property type="entry name" value="UbiB"/>
    <property type="match status" value="1"/>
</dbReference>
<dbReference type="PANTHER" id="PTHR10566">
    <property type="entry name" value="CHAPERONE-ACTIVITY OF BC1 COMPLEX CABC1 -RELATED"/>
    <property type="match status" value="1"/>
</dbReference>
<dbReference type="PANTHER" id="PTHR10566:SF113">
    <property type="entry name" value="PROTEIN ACTIVITY OF BC1 COMPLEX KINASE 7, CHLOROPLASTIC"/>
    <property type="match status" value="1"/>
</dbReference>
<dbReference type="Pfam" id="PF03109">
    <property type="entry name" value="ABC1"/>
    <property type="match status" value="1"/>
</dbReference>
<dbReference type="SUPFAM" id="SSF56112">
    <property type="entry name" value="Protein kinase-like (PK-like)"/>
    <property type="match status" value="1"/>
</dbReference>
<evidence type="ECO:0000255" key="1">
    <source>
        <dbReference type="HAMAP-Rule" id="MF_00414"/>
    </source>
</evidence>